<evidence type="ECO:0000250" key="1">
    <source>
        <dbReference type="UniProtKB" id="Q8R2K1"/>
    </source>
</evidence>
<evidence type="ECO:0000269" key="2">
    <source>
    </source>
</evidence>
<evidence type="ECO:0000303" key="3">
    <source>
    </source>
</evidence>
<evidence type="ECO:0000303" key="4">
    <source>
    </source>
</evidence>
<evidence type="ECO:0000305" key="5"/>
<protein>
    <recommendedName>
        <fullName>Fucose mutarotase</fullName>
        <ecNumber evidence="2">5.1.3.29</ecNumber>
    </recommendedName>
</protein>
<dbReference type="EC" id="5.1.3.29" evidence="2"/>
<dbReference type="EMBL" id="AK129527">
    <property type="protein sequence ID" value="BAC85178.1"/>
    <property type="molecule type" value="mRNA"/>
</dbReference>
<dbReference type="EMBL" id="AL360181">
    <property type="status" value="NOT_ANNOTATED_CDS"/>
    <property type="molecule type" value="Genomic_DNA"/>
</dbReference>
<dbReference type="EMBL" id="BC129818">
    <property type="protein sequence ID" value="AAI29819.1"/>
    <property type="molecule type" value="mRNA"/>
</dbReference>
<dbReference type="EMBL" id="BC129819">
    <property type="protein sequence ID" value="AAI29820.1"/>
    <property type="molecule type" value="mRNA"/>
</dbReference>
<dbReference type="EMBL" id="AI333356">
    <property type="status" value="NOT_ANNOTATED_CDS"/>
    <property type="molecule type" value="mRNA"/>
</dbReference>
<dbReference type="CCDS" id="CCDS44499.1">
    <molecule id="A2VDF0-1"/>
</dbReference>
<dbReference type="CCDS" id="CCDS7680.1">
    <molecule id="A2VDF0-2"/>
</dbReference>
<dbReference type="RefSeq" id="NP_001091953.1">
    <molecule id="A2VDF0-1"/>
    <property type="nucleotide sequence ID" value="NM_001098483.3"/>
</dbReference>
<dbReference type="RefSeq" id="NP_001288756.1">
    <property type="nucleotide sequence ID" value="NM_001301827.1"/>
</dbReference>
<dbReference type="RefSeq" id="NP_001288757.1">
    <property type="nucleotide sequence ID" value="NM_001301828.1"/>
</dbReference>
<dbReference type="RefSeq" id="NP_940874.2">
    <molecule id="A2VDF0-2"/>
    <property type="nucleotide sequence ID" value="NM_198472.3"/>
</dbReference>
<dbReference type="SMR" id="A2VDF0"/>
<dbReference type="BioGRID" id="129427">
    <property type="interactions" value="20"/>
</dbReference>
<dbReference type="FunCoup" id="A2VDF0">
    <property type="interactions" value="424"/>
</dbReference>
<dbReference type="IntAct" id="A2VDF0">
    <property type="interactions" value="17"/>
</dbReference>
<dbReference type="STRING" id="9606.ENSP00000278025"/>
<dbReference type="iPTMnet" id="A2VDF0"/>
<dbReference type="PhosphoSitePlus" id="A2VDF0"/>
<dbReference type="BioMuta" id="FUOM"/>
<dbReference type="jPOST" id="A2VDF0"/>
<dbReference type="MassIVE" id="A2VDF0"/>
<dbReference type="PaxDb" id="9606-ENSP00000278025"/>
<dbReference type="PeptideAtlas" id="A2VDF0"/>
<dbReference type="ProteomicsDB" id="537">
    <molecule id="A2VDF0-1"/>
</dbReference>
<dbReference type="ProteomicsDB" id="538">
    <molecule id="A2VDF0-2"/>
</dbReference>
<dbReference type="Pumba" id="A2VDF0"/>
<dbReference type="Antibodypedia" id="48803">
    <property type="antibodies" value="76 antibodies from 16 providers"/>
</dbReference>
<dbReference type="DNASU" id="282969"/>
<dbReference type="Ensembl" id="ENST00000278025.9">
    <molecule id="A2VDF0-1"/>
    <property type="protein sequence ID" value="ENSP00000278025.5"/>
    <property type="gene ID" value="ENSG00000148803.13"/>
</dbReference>
<dbReference type="Ensembl" id="ENST00000368552.8">
    <molecule id="A2VDF0-2"/>
    <property type="protein sequence ID" value="ENSP00000357540.5"/>
    <property type="gene ID" value="ENSG00000148803.13"/>
</dbReference>
<dbReference type="GeneID" id="282969"/>
<dbReference type="KEGG" id="hsa:282969"/>
<dbReference type="MANE-Select" id="ENST00000278025.9">
    <property type="protein sequence ID" value="ENSP00000278025.5"/>
    <property type="RefSeq nucleotide sequence ID" value="NM_001098483.3"/>
    <property type="RefSeq protein sequence ID" value="NP_001091953.1"/>
</dbReference>
<dbReference type="UCSC" id="uc001lmt.3">
    <molecule id="A2VDF0-1"/>
    <property type="organism name" value="human"/>
</dbReference>
<dbReference type="AGR" id="HGNC:24733"/>
<dbReference type="CTD" id="282969"/>
<dbReference type="GeneCards" id="FUOM"/>
<dbReference type="HGNC" id="HGNC:24733">
    <property type="gene designation" value="FUOM"/>
</dbReference>
<dbReference type="HPA" id="ENSG00000148803">
    <property type="expression patterns" value="Tissue enriched (liver)"/>
</dbReference>
<dbReference type="MIM" id="617725">
    <property type="type" value="gene"/>
</dbReference>
<dbReference type="neXtProt" id="NX_A2VDF0"/>
<dbReference type="OpenTargets" id="ENSG00000148803"/>
<dbReference type="PharmGKB" id="PA134972390"/>
<dbReference type="VEuPathDB" id="HostDB:ENSG00000148803"/>
<dbReference type="eggNOG" id="ENOG502RZR7">
    <property type="taxonomic scope" value="Eukaryota"/>
</dbReference>
<dbReference type="GeneTree" id="ENSGT00390000001197"/>
<dbReference type="InParanoid" id="A2VDF0"/>
<dbReference type="OMA" id="PVWDTYT"/>
<dbReference type="OrthoDB" id="10011710at2759"/>
<dbReference type="PAN-GO" id="A2VDF0">
    <property type="GO annotations" value="4 GO annotations based on evolutionary models"/>
</dbReference>
<dbReference type="PhylomeDB" id="A2VDF0"/>
<dbReference type="TreeFam" id="TF324689"/>
<dbReference type="BRENDA" id="5.1.3.29">
    <property type="organism ID" value="2681"/>
</dbReference>
<dbReference type="PathwayCommons" id="A2VDF0"/>
<dbReference type="Reactome" id="R-HSA-6787639">
    <property type="pathway name" value="GDP-fucose biosynthesis"/>
</dbReference>
<dbReference type="SignaLink" id="A2VDF0"/>
<dbReference type="UniPathway" id="UPA00956"/>
<dbReference type="BioGRID-ORCS" id="282969">
    <property type="hits" value="9 hits in 1124 CRISPR screens"/>
</dbReference>
<dbReference type="ChiTaRS" id="FUOM">
    <property type="organism name" value="human"/>
</dbReference>
<dbReference type="GenomeRNAi" id="282969"/>
<dbReference type="Pharos" id="A2VDF0">
    <property type="development level" value="Tbio"/>
</dbReference>
<dbReference type="PRO" id="PR:A2VDF0"/>
<dbReference type="Proteomes" id="UP000005640">
    <property type="component" value="Chromosome 10"/>
</dbReference>
<dbReference type="RNAct" id="A2VDF0">
    <property type="molecule type" value="protein"/>
</dbReference>
<dbReference type="Bgee" id="ENSG00000148803">
    <property type="expression patterns" value="Expressed in right lobe of liver and 120 other cell types or tissues"/>
</dbReference>
<dbReference type="ExpressionAtlas" id="A2VDF0">
    <property type="expression patterns" value="baseline and differential"/>
</dbReference>
<dbReference type="GO" id="GO:0005829">
    <property type="term" value="C:cytosol"/>
    <property type="evidence" value="ECO:0000304"/>
    <property type="project" value="Reactome"/>
</dbReference>
<dbReference type="GO" id="GO:0042806">
    <property type="term" value="F:fucose binding"/>
    <property type="evidence" value="ECO:0000250"/>
    <property type="project" value="UniProtKB"/>
</dbReference>
<dbReference type="GO" id="GO:0036373">
    <property type="term" value="F:L-fucose mutarotase activity"/>
    <property type="evidence" value="ECO:0000250"/>
    <property type="project" value="UniProtKB"/>
</dbReference>
<dbReference type="GO" id="GO:0016857">
    <property type="term" value="F:racemase and epimerase activity, acting on carbohydrates and derivatives"/>
    <property type="evidence" value="ECO:0000250"/>
    <property type="project" value="UniProtKB"/>
</dbReference>
<dbReference type="GO" id="GO:0060180">
    <property type="term" value="P:female mating behavior"/>
    <property type="evidence" value="ECO:0007669"/>
    <property type="project" value="Ensembl"/>
</dbReference>
<dbReference type="GO" id="GO:0006004">
    <property type="term" value="P:fucose metabolic process"/>
    <property type="evidence" value="ECO:0000250"/>
    <property type="project" value="UniProtKB"/>
</dbReference>
<dbReference type="GO" id="GO:0036065">
    <property type="term" value="P:fucosylation"/>
    <property type="evidence" value="ECO:0000318"/>
    <property type="project" value="GO_Central"/>
</dbReference>
<dbReference type="GO" id="GO:0042352">
    <property type="term" value="P:GDP-L-fucose salvage"/>
    <property type="evidence" value="ECO:0007669"/>
    <property type="project" value="Ensembl"/>
</dbReference>
<dbReference type="GO" id="GO:0045665">
    <property type="term" value="P:negative regulation of neuron differentiation"/>
    <property type="evidence" value="ECO:0007669"/>
    <property type="project" value="Ensembl"/>
</dbReference>
<dbReference type="GO" id="GO:0030182">
    <property type="term" value="P:neuron differentiation"/>
    <property type="evidence" value="ECO:0007669"/>
    <property type="project" value="Ensembl"/>
</dbReference>
<dbReference type="FunFam" id="3.40.1650.10:FF:000005">
    <property type="entry name" value="Fucose mutarotase"/>
    <property type="match status" value="1"/>
</dbReference>
<dbReference type="Gene3D" id="3.40.1650.10">
    <property type="entry name" value="RbsD-like domain"/>
    <property type="match status" value="1"/>
</dbReference>
<dbReference type="InterPro" id="IPR023750">
    <property type="entry name" value="RbsD-like_sf"/>
</dbReference>
<dbReference type="InterPro" id="IPR050443">
    <property type="entry name" value="RbsD/FucU_mutarotase"/>
</dbReference>
<dbReference type="InterPro" id="IPR007721">
    <property type="entry name" value="RbsD_FucU"/>
</dbReference>
<dbReference type="PANTHER" id="PTHR31690">
    <property type="entry name" value="FUCOSE MUTAROTASE"/>
    <property type="match status" value="1"/>
</dbReference>
<dbReference type="PANTHER" id="PTHR31690:SF4">
    <property type="entry name" value="FUCOSE MUTAROTASE"/>
    <property type="match status" value="1"/>
</dbReference>
<dbReference type="Pfam" id="PF05025">
    <property type="entry name" value="RbsD_FucU"/>
    <property type="match status" value="1"/>
</dbReference>
<dbReference type="SUPFAM" id="SSF102546">
    <property type="entry name" value="RbsD-like"/>
    <property type="match status" value="1"/>
</dbReference>
<accession>A2VDF0</accession>
<accession>A1L300</accession>
<accession>Q5VWY2</accession>
<accession>Q5VWY3</accession>
<accession>Q6ZPD2</accession>
<name>FUCM_HUMAN</name>
<proteinExistence type="evidence at protein level"/>
<feature type="chain" id="PRO_0000286553" description="Fucose mutarotase">
    <location>
        <begin position="1"/>
        <end position="154"/>
    </location>
</feature>
<feature type="active site" description="Proton donor" evidence="1">
    <location>
        <position position="24"/>
    </location>
</feature>
<feature type="active site" evidence="1">
    <location>
        <position position="69"/>
    </location>
</feature>
<feature type="active site" evidence="1">
    <location>
        <position position="120"/>
    </location>
</feature>
<feature type="binding site" evidence="1">
    <location>
        <position position="32"/>
    </location>
    <ligand>
        <name>substrate</name>
    </ligand>
</feature>
<feature type="binding site" evidence="1">
    <location>
        <position position="79"/>
    </location>
    <ligand>
        <name>substrate</name>
    </ligand>
</feature>
<feature type="binding site" evidence="1">
    <location>
        <position position="120"/>
    </location>
    <ligand>
        <name>substrate</name>
    </ligand>
</feature>
<feature type="binding site" evidence="1">
    <location>
        <position position="138"/>
    </location>
    <ligand>
        <name>substrate</name>
    </ligand>
</feature>
<feature type="binding site" evidence="1">
    <location>
        <position position="140"/>
    </location>
    <ligand>
        <name>substrate</name>
    </ligand>
</feature>
<feature type="splice variant" id="VSP_025080" description="In isoform 2." evidence="3 4">
    <original>E</original>
    <variation>C</variation>
    <location>
        <position position="134"/>
    </location>
</feature>
<feature type="splice variant" id="VSP_025081" description="In isoform 2." evidence="3 4">
    <location>
        <begin position="135"/>
        <end position="154"/>
    </location>
</feature>
<feature type="sequence conflict" description="In Ref. 1; BAC85178." evidence="5" ref="1">
    <original>L</original>
    <variation>P</variation>
    <location>
        <position position="81"/>
    </location>
</feature>
<gene>
    <name type="primary">FUOM</name>
    <name type="synonym">C10orf125</name>
</gene>
<organism>
    <name type="scientific">Homo sapiens</name>
    <name type="common">Human</name>
    <dbReference type="NCBI Taxonomy" id="9606"/>
    <lineage>
        <taxon>Eukaryota</taxon>
        <taxon>Metazoa</taxon>
        <taxon>Chordata</taxon>
        <taxon>Craniata</taxon>
        <taxon>Vertebrata</taxon>
        <taxon>Euteleostomi</taxon>
        <taxon>Mammalia</taxon>
        <taxon>Eutheria</taxon>
        <taxon>Euarchontoglires</taxon>
        <taxon>Primates</taxon>
        <taxon>Haplorrhini</taxon>
        <taxon>Catarrhini</taxon>
        <taxon>Hominidae</taxon>
        <taxon>Homo</taxon>
    </lineage>
</organism>
<sequence length="154" mass="16765">MVALKGVPALLSPELLYALARMGHGDEIVLADLNFPASSICQCGPMEIRADGLGIPQLLEAVLKLLPLDTYVESPAAVMELVPSDKERGLQTPVWTEYESILRRAGCVRALAKIERFEFYERAKKAFAVVATGETALYGNLILRKGVLALNPLL</sequence>
<keyword id="KW-0025">Alternative splicing</keyword>
<keyword id="KW-0413">Isomerase</keyword>
<keyword id="KW-1267">Proteomics identification</keyword>
<keyword id="KW-1185">Reference proteome</keyword>
<reference key="1">
    <citation type="journal article" date="2004" name="Nat. Genet.">
        <title>Complete sequencing and characterization of 21,243 full-length human cDNAs.</title>
        <authorList>
            <person name="Ota T."/>
            <person name="Suzuki Y."/>
            <person name="Nishikawa T."/>
            <person name="Otsuki T."/>
            <person name="Sugiyama T."/>
            <person name="Irie R."/>
            <person name="Wakamatsu A."/>
            <person name="Hayashi K."/>
            <person name="Sato H."/>
            <person name="Nagai K."/>
            <person name="Kimura K."/>
            <person name="Makita H."/>
            <person name="Sekine M."/>
            <person name="Obayashi M."/>
            <person name="Nishi T."/>
            <person name="Shibahara T."/>
            <person name="Tanaka T."/>
            <person name="Ishii S."/>
            <person name="Yamamoto J."/>
            <person name="Saito K."/>
            <person name="Kawai Y."/>
            <person name="Isono Y."/>
            <person name="Nakamura Y."/>
            <person name="Nagahari K."/>
            <person name="Murakami K."/>
            <person name="Yasuda T."/>
            <person name="Iwayanagi T."/>
            <person name="Wagatsuma M."/>
            <person name="Shiratori A."/>
            <person name="Sudo H."/>
            <person name="Hosoiri T."/>
            <person name="Kaku Y."/>
            <person name="Kodaira H."/>
            <person name="Kondo H."/>
            <person name="Sugawara M."/>
            <person name="Takahashi M."/>
            <person name="Kanda K."/>
            <person name="Yokoi T."/>
            <person name="Furuya T."/>
            <person name="Kikkawa E."/>
            <person name="Omura Y."/>
            <person name="Abe K."/>
            <person name="Kamihara K."/>
            <person name="Katsuta N."/>
            <person name="Sato K."/>
            <person name="Tanikawa M."/>
            <person name="Yamazaki M."/>
            <person name="Ninomiya K."/>
            <person name="Ishibashi T."/>
            <person name="Yamashita H."/>
            <person name="Murakawa K."/>
            <person name="Fujimori K."/>
            <person name="Tanai H."/>
            <person name="Kimata M."/>
            <person name="Watanabe M."/>
            <person name="Hiraoka S."/>
            <person name="Chiba Y."/>
            <person name="Ishida S."/>
            <person name="Ono Y."/>
            <person name="Takiguchi S."/>
            <person name="Watanabe S."/>
            <person name="Yosida M."/>
            <person name="Hotuta T."/>
            <person name="Kusano J."/>
            <person name="Kanehori K."/>
            <person name="Takahashi-Fujii A."/>
            <person name="Hara H."/>
            <person name="Tanase T.-O."/>
            <person name="Nomura Y."/>
            <person name="Togiya S."/>
            <person name="Komai F."/>
            <person name="Hara R."/>
            <person name="Takeuchi K."/>
            <person name="Arita M."/>
            <person name="Imose N."/>
            <person name="Musashino K."/>
            <person name="Yuuki H."/>
            <person name="Oshima A."/>
            <person name="Sasaki N."/>
            <person name="Aotsuka S."/>
            <person name="Yoshikawa Y."/>
            <person name="Matsunawa H."/>
            <person name="Ichihara T."/>
            <person name="Shiohata N."/>
            <person name="Sano S."/>
            <person name="Moriya S."/>
            <person name="Momiyama H."/>
            <person name="Satoh N."/>
            <person name="Takami S."/>
            <person name="Terashima Y."/>
            <person name="Suzuki O."/>
            <person name="Nakagawa S."/>
            <person name="Senoh A."/>
            <person name="Mizoguchi H."/>
            <person name="Goto Y."/>
            <person name="Shimizu F."/>
            <person name="Wakebe H."/>
            <person name="Hishigaki H."/>
            <person name="Watanabe T."/>
            <person name="Sugiyama A."/>
            <person name="Takemoto M."/>
            <person name="Kawakami B."/>
            <person name="Yamazaki M."/>
            <person name="Watanabe K."/>
            <person name="Kumagai A."/>
            <person name="Itakura S."/>
            <person name="Fukuzumi Y."/>
            <person name="Fujimori Y."/>
            <person name="Komiyama M."/>
            <person name="Tashiro H."/>
            <person name="Tanigami A."/>
            <person name="Fujiwara T."/>
            <person name="Ono T."/>
            <person name="Yamada K."/>
            <person name="Fujii Y."/>
            <person name="Ozaki K."/>
            <person name="Hirao M."/>
            <person name="Ohmori Y."/>
            <person name="Kawabata A."/>
            <person name="Hikiji T."/>
            <person name="Kobatake N."/>
            <person name="Inagaki H."/>
            <person name="Ikema Y."/>
            <person name="Okamoto S."/>
            <person name="Okitani R."/>
            <person name="Kawakami T."/>
            <person name="Noguchi S."/>
            <person name="Itoh T."/>
            <person name="Shigeta K."/>
            <person name="Senba T."/>
            <person name="Matsumura K."/>
            <person name="Nakajima Y."/>
            <person name="Mizuno T."/>
            <person name="Morinaga M."/>
            <person name="Sasaki M."/>
            <person name="Togashi T."/>
            <person name="Oyama M."/>
            <person name="Hata H."/>
            <person name="Watanabe M."/>
            <person name="Komatsu T."/>
            <person name="Mizushima-Sugano J."/>
            <person name="Satoh T."/>
            <person name="Shirai Y."/>
            <person name="Takahashi Y."/>
            <person name="Nakagawa K."/>
            <person name="Okumura K."/>
            <person name="Nagase T."/>
            <person name="Nomura N."/>
            <person name="Kikuchi H."/>
            <person name="Masuho Y."/>
            <person name="Yamashita R."/>
            <person name="Nakai K."/>
            <person name="Yada T."/>
            <person name="Nakamura Y."/>
            <person name="Ohara O."/>
            <person name="Isogai T."/>
            <person name="Sugano S."/>
        </authorList>
    </citation>
    <scope>NUCLEOTIDE SEQUENCE [LARGE SCALE MRNA] (ISOFORM 2)</scope>
    <source>
        <tissue>Macrophage</tissue>
    </source>
</reference>
<reference key="2">
    <citation type="journal article" date="2004" name="Nature">
        <title>The DNA sequence and comparative analysis of human chromosome 10.</title>
        <authorList>
            <person name="Deloukas P."/>
            <person name="Earthrowl M.E."/>
            <person name="Grafham D.V."/>
            <person name="Rubenfield M."/>
            <person name="French L."/>
            <person name="Steward C.A."/>
            <person name="Sims S.K."/>
            <person name="Jones M.C."/>
            <person name="Searle S."/>
            <person name="Scott C."/>
            <person name="Howe K."/>
            <person name="Hunt S.E."/>
            <person name="Andrews T.D."/>
            <person name="Gilbert J.G.R."/>
            <person name="Swarbreck D."/>
            <person name="Ashurst J.L."/>
            <person name="Taylor A."/>
            <person name="Battles J."/>
            <person name="Bird C.P."/>
            <person name="Ainscough R."/>
            <person name="Almeida J.P."/>
            <person name="Ashwell R.I.S."/>
            <person name="Ambrose K.D."/>
            <person name="Babbage A.K."/>
            <person name="Bagguley C.L."/>
            <person name="Bailey J."/>
            <person name="Banerjee R."/>
            <person name="Bates K."/>
            <person name="Beasley H."/>
            <person name="Bray-Allen S."/>
            <person name="Brown A.J."/>
            <person name="Brown J.Y."/>
            <person name="Burford D.C."/>
            <person name="Burrill W."/>
            <person name="Burton J."/>
            <person name="Cahill P."/>
            <person name="Camire D."/>
            <person name="Carter N.P."/>
            <person name="Chapman J.C."/>
            <person name="Clark S.Y."/>
            <person name="Clarke G."/>
            <person name="Clee C.M."/>
            <person name="Clegg S."/>
            <person name="Corby N."/>
            <person name="Coulson A."/>
            <person name="Dhami P."/>
            <person name="Dutta I."/>
            <person name="Dunn M."/>
            <person name="Faulkner L."/>
            <person name="Frankish A."/>
            <person name="Frankland J.A."/>
            <person name="Garner P."/>
            <person name="Garnett J."/>
            <person name="Gribble S."/>
            <person name="Griffiths C."/>
            <person name="Grocock R."/>
            <person name="Gustafson E."/>
            <person name="Hammond S."/>
            <person name="Harley J.L."/>
            <person name="Hart E."/>
            <person name="Heath P.D."/>
            <person name="Ho T.P."/>
            <person name="Hopkins B."/>
            <person name="Horne J."/>
            <person name="Howden P.J."/>
            <person name="Huckle E."/>
            <person name="Hynds C."/>
            <person name="Johnson C."/>
            <person name="Johnson D."/>
            <person name="Kana A."/>
            <person name="Kay M."/>
            <person name="Kimberley A.M."/>
            <person name="Kershaw J.K."/>
            <person name="Kokkinaki M."/>
            <person name="Laird G.K."/>
            <person name="Lawlor S."/>
            <person name="Lee H.M."/>
            <person name="Leongamornlert D.A."/>
            <person name="Laird G."/>
            <person name="Lloyd C."/>
            <person name="Lloyd D.M."/>
            <person name="Loveland J."/>
            <person name="Lovell J."/>
            <person name="McLaren S."/>
            <person name="McLay K.E."/>
            <person name="McMurray A."/>
            <person name="Mashreghi-Mohammadi M."/>
            <person name="Matthews L."/>
            <person name="Milne S."/>
            <person name="Nickerson T."/>
            <person name="Nguyen M."/>
            <person name="Overton-Larty E."/>
            <person name="Palmer S.A."/>
            <person name="Pearce A.V."/>
            <person name="Peck A.I."/>
            <person name="Pelan S."/>
            <person name="Phillimore B."/>
            <person name="Porter K."/>
            <person name="Rice C.M."/>
            <person name="Rogosin A."/>
            <person name="Ross M.T."/>
            <person name="Sarafidou T."/>
            <person name="Sehra H.K."/>
            <person name="Shownkeen R."/>
            <person name="Skuce C.D."/>
            <person name="Smith M."/>
            <person name="Standring L."/>
            <person name="Sycamore N."/>
            <person name="Tester J."/>
            <person name="Thorpe A."/>
            <person name="Torcasso W."/>
            <person name="Tracey A."/>
            <person name="Tromans A."/>
            <person name="Tsolas J."/>
            <person name="Wall M."/>
            <person name="Walsh J."/>
            <person name="Wang H."/>
            <person name="Weinstock K."/>
            <person name="West A.P."/>
            <person name="Willey D.L."/>
            <person name="Whitehead S.L."/>
            <person name="Wilming L."/>
            <person name="Wray P.W."/>
            <person name="Young L."/>
            <person name="Chen Y."/>
            <person name="Lovering R.C."/>
            <person name="Moschonas N.K."/>
            <person name="Siebert R."/>
            <person name="Fechtel K."/>
            <person name="Bentley D."/>
            <person name="Durbin R.M."/>
            <person name="Hubbard T."/>
            <person name="Doucette-Stamm L."/>
            <person name="Beck S."/>
            <person name="Smith D.R."/>
            <person name="Rogers J."/>
        </authorList>
    </citation>
    <scope>NUCLEOTIDE SEQUENCE [LARGE SCALE GENOMIC DNA]</scope>
</reference>
<reference key="3">
    <citation type="journal article" date="2004" name="Genome Res.">
        <title>The status, quality, and expansion of the NIH full-length cDNA project: the Mammalian Gene Collection (MGC).</title>
        <authorList>
            <consortium name="The MGC Project Team"/>
        </authorList>
    </citation>
    <scope>NUCLEOTIDE SEQUENCE [LARGE SCALE MRNA] (ISOFORM 2)</scope>
    <scope>NUCLEOTIDE SEQUENCE [LARGE SCALE MRNA] OF 1-140 (ISOFORM 1)</scope>
</reference>
<reference key="4">
    <citation type="submission" date="1998-02" db="EMBL/GenBank/DDBJ databases">
        <authorList>
            <consortium name="The Cancer Genome Anatomy Project (CGAP) at the National Cancer Institute"/>
        </authorList>
    </citation>
    <scope>NUCLEOTIDE SEQUENCE [LARGE SCALE MRNA] OF 95-154 (ISOFORM 1)</scope>
</reference>
<reference key="5">
    <citation type="journal article" date="2007" name="Glycobiology">
        <title>Characterization and role of fucose mutarotase in mammalian cells.</title>
        <authorList>
            <person name="Park D."/>
            <person name="Ryu K.S."/>
            <person name="Choi D."/>
            <person name="Kwak J."/>
            <person name="Park C."/>
        </authorList>
    </citation>
    <scope>FUNCTION</scope>
    <scope>CATALYTIC ACTIVITY</scope>
</reference>
<reference key="6">
    <citation type="journal article" date="2014" name="J. Proteomics">
        <title>An enzyme assisted RP-RPLC approach for in-depth analysis of human liver phosphoproteome.</title>
        <authorList>
            <person name="Bian Y."/>
            <person name="Song C."/>
            <person name="Cheng K."/>
            <person name="Dong M."/>
            <person name="Wang F."/>
            <person name="Huang J."/>
            <person name="Sun D."/>
            <person name="Wang L."/>
            <person name="Ye M."/>
            <person name="Zou H."/>
        </authorList>
    </citation>
    <scope>IDENTIFICATION BY MASS SPECTROMETRY [LARGE SCALE ANALYSIS]</scope>
    <source>
        <tissue>Liver</tissue>
    </source>
</reference>
<comment type="function">
    <text evidence="2">Involved in the interconversion between alpha- and beta-L-fucoses. L-Fucose (6-deoxy-L-galactose) exists as alpha-L-fucose (29.5%) and beta-L-fucose (70.5%), the beta-form is metabolized through the salvage pathway. GDP-L-fucose formed either by the de novo or salvage pathways is transported into the endoplasmic reticulum, where it serves as a substrate for N- and O-glycosylations by fucosyltransferases. Fucosylated structures expressed on cell surfaces or secreted in biological fluids are believed to play a critical role in cell-cell adhesion and recognition processes.</text>
</comment>
<comment type="catalytic activity">
    <reaction evidence="2">
        <text>alpha-L-fucose = beta-L-fucose</text>
        <dbReference type="Rhea" id="RHEA:25580"/>
        <dbReference type="ChEBI" id="CHEBI:42548"/>
        <dbReference type="ChEBI" id="CHEBI:42589"/>
        <dbReference type="EC" id="5.1.3.29"/>
    </reaction>
</comment>
<comment type="pathway">
    <text evidence="2">Carbohydrate metabolism; L-fucose metabolism.</text>
</comment>
<comment type="subunit">
    <text evidence="1">Mainly homodimer, but also exists as homotetramer, homooctamer, and homodecamer. The homodimeric form seems catalytically inactive (By similarity).</text>
</comment>
<comment type="alternative products">
    <event type="alternative splicing"/>
    <isoform>
        <id>A2VDF0-1</id>
        <name>1</name>
        <sequence type="displayed"/>
    </isoform>
    <isoform>
        <id>A2VDF0-2</id>
        <name>2</name>
        <sequence type="described" ref="VSP_025080 VSP_025081"/>
    </isoform>
</comment>
<comment type="similarity">
    <text evidence="5">Belongs to the RbsD / FucU family.</text>
</comment>